<dbReference type="EC" id="2.7.8.13" evidence="1"/>
<dbReference type="EMBL" id="CP000239">
    <property type="protein sequence ID" value="ABD00126.1"/>
    <property type="molecule type" value="Genomic_DNA"/>
</dbReference>
<dbReference type="RefSeq" id="WP_011430800.1">
    <property type="nucleotide sequence ID" value="NC_007775.1"/>
</dbReference>
<dbReference type="SMR" id="Q2JT76"/>
<dbReference type="STRING" id="321327.CYA_1982"/>
<dbReference type="KEGG" id="cya:CYA_1982"/>
<dbReference type="eggNOG" id="COG0472">
    <property type="taxonomic scope" value="Bacteria"/>
</dbReference>
<dbReference type="HOGENOM" id="CLU_023982_0_2_3"/>
<dbReference type="OrthoDB" id="9805475at2"/>
<dbReference type="UniPathway" id="UPA00219"/>
<dbReference type="Proteomes" id="UP000008818">
    <property type="component" value="Chromosome"/>
</dbReference>
<dbReference type="GO" id="GO:0005886">
    <property type="term" value="C:plasma membrane"/>
    <property type="evidence" value="ECO:0007669"/>
    <property type="project" value="UniProtKB-SubCell"/>
</dbReference>
<dbReference type="GO" id="GO:0046872">
    <property type="term" value="F:metal ion binding"/>
    <property type="evidence" value="ECO:0007669"/>
    <property type="project" value="UniProtKB-KW"/>
</dbReference>
<dbReference type="GO" id="GO:0008963">
    <property type="term" value="F:phospho-N-acetylmuramoyl-pentapeptide-transferase activity"/>
    <property type="evidence" value="ECO:0007669"/>
    <property type="project" value="UniProtKB-UniRule"/>
</dbReference>
<dbReference type="GO" id="GO:0051992">
    <property type="term" value="F:UDP-N-acetylmuramoyl-L-alanyl-D-glutamyl-meso-2,6-diaminopimelyl-D-alanyl-D-alanine:undecaprenyl-phosphate transferase activity"/>
    <property type="evidence" value="ECO:0007669"/>
    <property type="project" value="RHEA"/>
</dbReference>
<dbReference type="GO" id="GO:0051301">
    <property type="term" value="P:cell division"/>
    <property type="evidence" value="ECO:0007669"/>
    <property type="project" value="UniProtKB-KW"/>
</dbReference>
<dbReference type="GO" id="GO:0071555">
    <property type="term" value="P:cell wall organization"/>
    <property type="evidence" value="ECO:0007669"/>
    <property type="project" value="UniProtKB-KW"/>
</dbReference>
<dbReference type="GO" id="GO:0009252">
    <property type="term" value="P:peptidoglycan biosynthetic process"/>
    <property type="evidence" value="ECO:0007669"/>
    <property type="project" value="UniProtKB-UniRule"/>
</dbReference>
<dbReference type="GO" id="GO:0008360">
    <property type="term" value="P:regulation of cell shape"/>
    <property type="evidence" value="ECO:0007669"/>
    <property type="project" value="UniProtKB-KW"/>
</dbReference>
<dbReference type="CDD" id="cd06852">
    <property type="entry name" value="GT_MraY"/>
    <property type="match status" value="1"/>
</dbReference>
<dbReference type="HAMAP" id="MF_00038">
    <property type="entry name" value="MraY"/>
    <property type="match status" value="1"/>
</dbReference>
<dbReference type="InterPro" id="IPR000715">
    <property type="entry name" value="Glycosyl_transferase_4"/>
</dbReference>
<dbReference type="InterPro" id="IPR003524">
    <property type="entry name" value="PNAcMuramoyl-5peptid_Trfase"/>
</dbReference>
<dbReference type="InterPro" id="IPR018480">
    <property type="entry name" value="PNAcMuramoyl-5peptid_Trfase_CS"/>
</dbReference>
<dbReference type="NCBIfam" id="TIGR00445">
    <property type="entry name" value="mraY"/>
    <property type="match status" value="1"/>
</dbReference>
<dbReference type="PANTHER" id="PTHR22926">
    <property type="entry name" value="PHOSPHO-N-ACETYLMURAMOYL-PENTAPEPTIDE-TRANSFERASE"/>
    <property type="match status" value="1"/>
</dbReference>
<dbReference type="PANTHER" id="PTHR22926:SF5">
    <property type="entry name" value="PHOSPHO-N-ACETYLMURAMOYL-PENTAPEPTIDE-TRANSFERASE HOMOLOG"/>
    <property type="match status" value="1"/>
</dbReference>
<dbReference type="Pfam" id="PF00953">
    <property type="entry name" value="Glycos_transf_4"/>
    <property type="match status" value="1"/>
</dbReference>
<dbReference type="Pfam" id="PF10555">
    <property type="entry name" value="MraY_sig1"/>
    <property type="match status" value="1"/>
</dbReference>
<dbReference type="PROSITE" id="PS01347">
    <property type="entry name" value="MRAY_1"/>
    <property type="match status" value="1"/>
</dbReference>
<dbReference type="PROSITE" id="PS01348">
    <property type="entry name" value="MRAY_2"/>
    <property type="match status" value="1"/>
</dbReference>
<name>MRAY_SYNJA</name>
<evidence type="ECO:0000255" key="1">
    <source>
        <dbReference type="HAMAP-Rule" id="MF_00038"/>
    </source>
</evidence>
<feature type="chain" id="PRO_0000235493" description="Phospho-N-acetylmuramoyl-pentapeptide-transferase">
    <location>
        <begin position="1"/>
        <end position="340"/>
    </location>
</feature>
<feature type="transmembrane region" description="Helical" evidence="1">
    <location>
        <begin position="24"/>
        <end position="44"/>
    </location>
</feature>
<feature type="transmembrane region" description="Helical" evidence="1">
    <location>
        <begin position="69"/>
        <end position="89"/>
    </location>
</feature>
<feature type="transmembrane region" description="Helical" evidence="1">
    <location>
        <begin position="95"/>
        <end position="115"/>
    </location>
</feature>
<feature type="transmembrane region" description="Helical" evidence="1">
    <location>
        <begin position="129"/>
        <end position="149"/>
    </location>
</feature>
<feature type="transmembrane region" description="Helical" evidence="1">
    <location>
        <begin position="156"/>
        <end position="176"/>
    </location>
</feature>
<feature type="transmembrane region" description="Helical" evidence="1">
    <location>
        <begin position="196"/>
        <end position="216"/>
    </location>
</feature>
<feature type="transmembrane region" description="Helical" evidence="1">
    <location>
        <begin position="235"/>
        <end position="255"/>
    </location>
</feature>
<feature type="transmembrane region" description="Helical" evidence="1">
    <location>
        <begin position="260"/>
        <end position="280"/>
    </location>
</feature>
<feature type="transmembrane region" description="Helical" evidence="1">
    <location>
        <begin position="316"/>
        <end position="336"/>
    </location>
</feature>
<reference key="1">
    <citation type="journal article" date="2007" name="ISME J.">
        <title>Population level functional diversity in a microbial community revealed by comparative genomic and metagenomic analyses.</title>
        <authorList>
            <person name="Bhaya D."/>
            <person name="Grossman A.R."/>
            <person name="Steunou A.-S."/>
            <person name="Khuri N."/>
            <person name="Cohan F.M."/>
            <person name="Hamamura N."/>
            <person name="Melendrez M.C."/>
            <person name="Bateson M.M."/>
            <person name="Ward D.M."/>
            <person name="Heidelberg J.F."/>
        </authorList>
    </citation>
    <scope>NUCLEOTIDE SEQUENCE [LARGE SCALE GENOMIC DNA]</scope>
    <source>
        <strain>JA-3-3Ab</strain>
    </source>
</reference>
<organism>
    <name type="scientific">Synechococcus sp. (strain JA-3-3Ab)</name>
    <name type="common">Cyanobacteria bacterium Yellowstone A-Prime</name>
    <dbReference type="NCBI Taxonomy" id="321327"/>
    <lineage>
        <taxon>Bacteria</taxon>
        <taxon>Bacillati</taxon>
        <taxon>Cyanobacteriota</taxon>
        <taxon>Cyanophyceae</taxon>
        <taxon>Synechococcales</taxon>
        <taxon>Synechococcaceae</taxon>
        <taxon>Synechococcus</taxon>
    </lineage>
</organism>
<proteinExistence type="inferred from homology"/>
<protein>
    <recommendedName>
        <fullName evidence="1">Phospho-N-acetylmuramoyl-pentapeptide-transferase</fullName>
        <ecNumber evidence="1">2.7.8.13</ecNumber>
    </recommendedName>
    <alternativeName>
        <fullName evidence="1">UDP-MurNAc-pentapeptide phosphotransferase</fullName>
    </alternativeName>
</protein>
<comment type="function">
    <text evidence="1">Catalyzes the initial step of the lipid cycle reactions in the biosynthesis of the cell wall peptidoglycan: transfers peptidoglycan precursor phospho-MurNAc-pentapeptide from UDP-MurNAc-pentapeptide onto the lipid carrier undecaprenyl phosphate, yielding undecaprenyl-pyrophosphoryl-MurNAc-pentapeptide, known as lipid I.</text>
</comment>
<comment type="catalytic activity">
    <reaction evidence="1">
        <text>UDP-N-acetyl-alpha-D-muramoyl-L-alanyl-gamma-D-glutamyl-meso-2,6-diaminopimeloyl-D-alanyl-D-alanine + di-trans,octa-cis-undecaprenyl phosphate = di-trans,octa-cis-undecaprenyl diphospho-N-acetyl-alpha-D-muramoyl-L-alanyl-D-glutamyl-meso-2,6-diaminopimeloyl-D-alanyl-D-alanine + UMP</text>
        <dbReference type="Rhea" id="RHEA:28386"/>
        <dbReference type="ChEBI" id="CHEBI:57865"/>
        <dbReference type="ChEBI" id="CHEBI:60392"/>
        <dbReference type="ChEBI" id="CHEBI:61386"/>
        <dbReference type="ChEBI" id="CHEBI:61387"/>
        <dbReference type="EC" id="2.7.8.13"/>
    </reaction>
</comment>
<comment type="cofactor">
    <cofactor evidence="1">
        <name>Mg(2+)</name>
        <dbReference type="ChEBI" id="CHEBI:18420"/>
    </cofactor>
</comment>
<comment type="pathway">
    <text evidence="1">Cell wall biogenesis; peptidoglycan biosynthesis.</text>
</comment>
<comment type="subcellular location">
    <subcellularLocation>
        <location evidence="1">Cell inner membrane</location>
        <topology evidence="1">Multi-pass membrane protein</topology>
    </subcellularLocation>
</comment>
<comment type="similarity">
    <text evidence="1">Belongs to the glycosyltransferase 4 family. MraY subfamily.</text>
</comment>
<gene>
    <name evidence="1" type="primary">mraY</name>
    <name type="ordered locus">CYA_1982</name>
</gene>
<keyword id="KW-0131">Cell cycle</keyword>
<keyword id="KW-0132">Cell division</keyword>
<keyword id="KW-0997">Cell inner membrane</keyword>
<keyword id="KW-1003">Cell membrane</keyword>
<keyword id="KW-0133">Cell shape</keyword>
<keyword id="KW-0961">Cell wall biogenesis/degradation</keyword>
<keyword id="KW-0460">Magnesium</keyword>
<keyword id="KW-0472">Membrane</keyword>
<keyword id="KW-0479">Metal-binding</keyword>
<keyword id="KW-0573">Peptidoglycan synthesis</keyword>
<keyword id="KW-0808">Transferase</keyword>
<keyword id="KW-0812">Transmembrane</keyword>
<keyword id="KW-1133">Transmembrane helix</keyword>
<sequence>MALSLVLGLALSALVIGIRPQVAVPFGLSVLGSALLGSLLLPVLRRWKAGQVIREEGPQSHHKKAGTPTMGGLSFLPVGLLVAGIGSGWDPQWLAVALLTLAYTVVGWLDDWLVIRQRSNKGLSAKSKLLLQVGIGLVFCGYLAWQGIPTVLTLPGIGALPLGWLFWPLALFVLVGTNNAVNLADGMDGLAAGMVALVLAGLGLTAADPVLALVAFALSGTCLGFLVHNHHRARLFMGDTGSLGLGGALAGLALLGDQLWALAWMGAVLVAEALSVILQVGYFQYTKRKTGQGKRLLRMSPLHHHLELGGWSEVQVVGCFYGLTALLVGLGWAWWHWAGA</sequence>
<accession>Q2JT76</accession>